<keyword id="KW-0067">ATP-binding</keyword>
<keyword id="KW-0131">Cell cycle</keyword>
<keyword id="KW-0132">Cell division</keyword>
<keyword id="KW-0133">Cell shape</keyword>
<keyword id="KW-0961">Cell wall biogenesis/degradation</keyword>
<keyword id="KW-0963">Cytoplasm</keyword>
<keyword id="KW-0436">Ligase</keyword>
<keyword id="KW-0547">Nucleotide-binding</keyword>
<keyword id="KW-0573">Peptidoglycan synthesis</keyword>
<evidence type="ECO:0000255" key="1">
    <source>
        <dbReference type="HAMAP-Rule" id="MF_00639"/>
    </source>
</evidence>
<comment type="function">
    <text evidence="1">Cell wall formation. Catalyzes the addition of glutamate to the nucleotide precursor UDP-N-acetylmuramoyl-L-alanine (UMA).</text>
</comment>
<comment type="catalytic activity">
    <reaction evidence="1">
        <text>UDP-N-acetyl-alpha-D-muramoyl-L-alanine + D-glutamate + ATP = UDP-N-acetyl-alpha-D-muramoyl-L-alanyl-D-glutamate + ADP + phosphate + H(+)</text>
        <dbReference type="Rhea" id="RHEA:16429"/>
        <dbReference type="ChEBI" id="CHEBI:15378"/>
        <dbReference type="ChEBI" id="CHEBI:29986"/>
        <dbReference type="ChEBI" id="CHEBI:30616"/>
        <dbReference type="ChEBI" id="CHEBI:43474"/>
        <dbReference type="ChEBI" id="CHEBI:83898"/>
        <dbReference type="ChEBI" id="CHEBI:83900"/>
        <dbReference type="ChEBI" id="CHEBI:456216"/>
        <dbReference type="EC" id="6.3.2.9"/>
    </reaction>
</comment>
<comment type="pathway">
    <text evidence="1">Cell wall biogenesis; peptidoglycan biosynthesis.</text>
</comment>
<comment type="subcellular location">
    <subcellularLocation>
        <location evidence="1">Cytoplasm</location>
    </subcellularLocation>
</comment>
<comment type="similarity">
    <text evidence="1">Belongs to the MurCDEF family.</text>
</comment>
<feature type="chain" id="PRO_0000301415" description="UDP-N-acetylmuramoylalanine--D-glutamate ligase">
    <location>
        <begin position="1"/>
        <end position="450"/>
    </location>
</feature>
<feature type="binding site" evidence="1">
    <location>
        <begin position="119"/>
        <end position="125"/>
    </location>
    <ligand>
        <name>ATP</name>
        <dbReference type="ChEBI" id="CHEBI:30616"/>
    </ligand>
</feature>
<proteinExistence type="inferred from homology"/>
<accession>A0RHT3</accession>
<name>MURD_BACAH</name>
<dbReference type="EC" id="6.3.2.9" evidence="1"/>
<dbReference type="EMBL" id="CP000485">
    <property type="protein sequence ID" value="ABK86776.1"/>
    <property type="molecule type" value="Genomic_DNA"/>
</dbReference>
<dbReference type="RefSeq" id="WP_000860120.1">
    <property type="nucleotide sequence ID" value="NC_008600.1"/>
</dbReference>
<dbReference type="SMR" id="A0RHT3"/>
<dbReference type="KEGG" id="btl:BALH_3542"/>
<dbReference type="HOGENOM" id="CLU_032540_0_1_9"/>
<dbReference type="UniPathway" id="UPA00219"/>
<dbReference type="GO" id="GO:0005737">
    <property type="term" value="C:cytoplasm"/>
    <property type="evidence" value="ECO:0007669"/>
    <property type="project" value="UniProtKB-SubCell"/>
</dbReference>
<dbReference type="GO" id="GO:0005524">
    <property type="term" value="F:ATP binding"/>
    <property type="evidence" value="ECO:0007669"/>
    <property type="project" value="UniProtKB-UniRule"/>
</dbReference>
<dbReference type="GO" id="GO:0008764">
    <property type="term" value="F:UDP-N-acetylmuramoylalanine-D-glutamate ligase activity"/>
    <property type="evidence" value="ECO:0007669"/>
    <property type="project" value="UniProtKB-UniRule"/>
</dbReference>
<dbReference type="GO" id="GO:0051301">
    <property type="term" value="P:cell division"/>
    <property type="evidence" value="ECO:0007669"/>
    <property type="project" value="UniProtKB-KW"/>
</dbReference>
<dbReference type="GO" id="GO:0071555">
    <property type="term" value="P:cell wall organization"/>
    <property type="evidence" value="ECO:0007669"/>
    <property type="project" value="UniProtKB-KW"/>
</dbReference>
<dbReference type="GO" id="GO:0009252">
    <property type="term" value="P:peptidoglycan biosynthetic process"/>
    <property type="evidence" value="ECO:0007669"/>
    <property type="project" value="UniProtKB-UniRule"/>
</dbReference>
<dbReference type="GO" id="GO:0008360">
    <property type="term" value="P:regulation of cell shape"/>
    <property type="evidence" value="ECO:0007669"/>
    <property type="project" value="UniProtKB-KW"/>
</dbReference>
<dbReference type="Gene3D" id="3.90.190.20">
    <property type="entry name" value="Mur ligase, C-terminal domain"/>
    <property type="match status" value="1"/>
</dbReference>
<dbReference type="Gene3D" id="3.40.1190.10">
    <property type="entry name" value="Mur-like, catalytic domain"/>
    <property type="match status" value="1"/>
</dbReference>
<dbReference type="Gene3D" id="3.40.50.720">
    <property type="entry name" value="NAD(P)-binding Rossmann-like Domain"/>
    <property type="match status" value="1"/>
</dbReference>
<dbReference type="HAMAP" id="MF_00639">
    <property type="entry name" value="MurD"/>
    <property type="match status" value="1"/>
</dbReference>
<dbReference type="InterPro" id="IPR036565">
    <property type="entry name" value="Mur-like_cat_sf"/>
</dbReference>
<dbReference type="InterPro" id="IPR004101">
    <property type="entry name" value="Mur_ligase_C"/>
</dbReference>
<dbReference type="InterPro" id="IPR036615">
    <property type="entry name" value="Mur_ligase_C_dom_sf"/>
</dbReference>
<dbReference type="InterPro" id="IPR013221">
    <property type="entry name" value="Mur_ligase_cen"/>
</dbReference>
<dbReference type="InterPro" id="IPR005762">
    <property type="entry name" value="MurD"/>
</dbReference>
<dbReference type="NCBIfam" id="TIGR01087">
    <property type="entry name" value="murD"/>
    <property type="match status" value="1"/>
</dbReference>
<dbReference type="PANTHER" id="PTHR43692">
    <property type="entry name" value="UDP-N-ACETYLMURAMOYLALANINE--D-GLUTAMATE LIGASE"/>
    <property type="match status" value="1"/>
</dbReference>
<dbReference type="PANTHER" id="PTHR43692:SF1">
    <property type="entry name" value="UDP-N-ACETYLMURAMOYLALANINE--D-GLUTAMATE LIGASE"/>
    <property type="match status" value="1"/>
</dbReference>
<dbReference type="Pfam" id="PF02875">
    <property type="entry name" value="Mur_ligase_C"/>
    <property type="match status" value="1"/>
</dbReference>
<dbReference type="Pfam" id="PF08245">
    <property type="entry name" value="Mur_ligase_M"/>
    <property type="match status" value="1"/>
</dbReference>
<dbReference type="Pfam" id="PF21799">
    <property type="entry name" value="MurD-like_N"/>
    <property type="match status" value="1"/>
</dbReference>
<dbReference type="SUPFAM" id="SSF51984">
    <property type="entry name" value="MurCD N-terminal domain"/>
    <property type="match status" value="1"/>
</dbReference>
<dbReference type="SUPFAM" id="SSF53623">
    <property type="entry name" value="MurD-like peptide ligases, catalytic domain"/>
    <property type="match status" value="1"/>
</dbReference>
<dbReference type="SUPFAM" id="SSF53244">
    <property type="entry name" value="MurD-like peptide ligases, peptide-binding domain"/>
    <property type="match status" value="1"/>
</dbReference>
<sequence>MKTVTEFQNKNILVLGIAKSGYAAATLLQKLGANVIVNDGKPLAENVLAAELQAKGMDVVCGGHPLELLERNISLVVKNPGIPYSNPILVAAKEKQIPIVTEVELAYRISEAPFVGITGSNGKTTTTMLTFEMLKEGQKHPVIAGNIGTVACEVAQDAKENEVVVTELSSFQLMGVELFQPKIAAFLNLFEAHLDYHGTKKEYGLAKANIFKNQTENDYSVINADDADVMALSAYSKGQKVLFSTTKEIEDGACIKDNALYFKAEKVVEVDDIVLPGQHNLENILAAMSIAKLLGVSNEAITAVLKRFTGVKHRLEYVTTINNRKFYNDSKATNMLATEKALSAFTQPTVLLAGGLDRGNEFDDLIPYFKNVKAIVTFGQTAPKLVRAAEKAGLETIESVDTLDEAVVKAYAHSTDGDVILLSPACASWDQFKTFEERGDIFIQAVHKLI</sequence>
<reference key="1">
    <citation type="journal article" date="2007" name="J. Bacteriol.">
        <title>The complete genome sequence of Bacillus thuringiensis Al Hakam.</title>
        <authorList>
            <person name="Challacombe J.F."/>
            <person name="Altherr M.R."/>
            <person name="Xie G."/>
            <person name="Bhotika S.S."/>
            <person name="Brown N."/>
            <person name="Bruce D."/>
            <person name="Campbell C.S."/>
            <person name="Campbell M.L."/>
            <person name="Chen J."/>
            <person name="Chertkov O."/>
            <person name="Cleland C."/>
            <person name="Dimitrijevic M."/>
            <person name="Doggett N.A."/>
            <person name="Fawcett J.J."/>
            <person name="Glavina T."/>
            <person name="Goodwin L.A."/>
            <person name="Green L.D."/>
            <person name="Han C.S."/>
            <person name="Hill K.K."/>
            <person name="Hitchcock P."/>
            <person name="Jackson P.J."/>
            <person name="Keim P."/>
            <person name="Kewalramani A.R."/>
            <person name="Longmire J."/>
            <person name="Lucas S."/>
            <person name="Malfatti S."/>
            <person name="Martinez D."/>
            <person name="McMurry K."/>
            <person name="Meincke L.J."/>
            <person name="Misra M."/>
            <person name="Moseman B.L."/>
            <person name="Mundt M."/>
            <person name="Munk A.C."/>
            <person name="Okinaka R.T."/>
            <person name="Parson-Quintana B."/>
            <person name="Reilly L.P."/>
            <person name="Richardson P."/>
            <person name="Robinson D.L."/>
            <person name="Saunders E."/>
            <person name="Tapia R."/>
            <person name="Tesmer J.G."/>
            <person name="Thayer N."/>
            <person name="Thompson L.S."/>
            <person name="Tice H."/>
            <person name="Ticknor L.O."/>
            <person name="Wills P.L."/>
            <person name="Gilna P."/>
            <person name="Brettin T.S."/>
        </authorList>
    </citation>
    <scope>NUCLEOTIDE SEQUENCE [LARGE SCALE GENOMIC DNA]</scope>
    <source>
        <strain>Al Hakam</strain>
    </source>
</reference>
<organism>
    <name type="scientific">Bacillus thuringiensis (strain Al Hakam)</name>
    <dbReference type="NCBI Taxonomy" id="412694"/>
    <lineage>
        <taxon>Bacteria</taxon>
        <taxon>Bacillati</taxon>
        <taxon>Bacillota</taxon>
        <taxon>Bacilli</taxon>
        <taxon>Bacillales</taxon>
        <taxon>Bacillaceae</taxon>
        <taxon>Bacillus</taxon>
        <taxon>Bacillus cereus group</taxon>
    </lineage>
</organism>
<protein>
    <recommendedName>
        <fullName evidence="1">UDP-N-acetylmuramoylalanine--D-glutamate ligase</fullName>
        <ecNumber evidence="1">6.3.2.9</ecNumber>
    </recommendedName>
    <alternativeName>
        <fullName evidence="1">D-glutamic acid-adding enzyme</fullName>
    </alternativeName>
    <alternativeName>
        <fullName evidence="1">UDP-N-acetylmuramoyl-L-alanyl-D-glutamate synthetase</fullName>
    </alternativeName>
</protein>
<gene>
    <name evidence="1" type="primary">murD</name>
    <name type="ordered locus">BALH_3542</name>
</gene>